<evidence type="ECO:0000255" key="1">
    <source>
        <dbReference type="HAMAP-Rule" id="MF_01576"/>
    </source>
</evidence>
<accession>Q3A1Q7</accession>
<name>FOLD_SYNC1</name>
<dbReference type="EC" id="1.5.1.5" evidence="1"/>
<dbReference type="EC" id="3.5.4.9" evidence="1"/>
<dbReference type="EMBL" id="CP000142">
    <property type="protein sequence ID" value="ABA89700.1"/>
    <property type="molecule type" value="Genomic_DNA"/>
</dbReference>
<dbReference type="RefSeq" id="WP_011342227.1">
    <property type="nucleotide sequence ID" value="NC_007498.2"/>
</dbReference>
<dbReference type="SMR" id="Q3A1Q7"/>
<dbReference type="STRING" id="338963.Pcar_2461"/>
<dbReference type="KEGG" id="pca:Pcar_2461"/>
<dbReference type="eggNOG" id="COG0190">
    <property type="taxonomic scope" value="Bacteria"/>
</dbReference>
<dbReference type="HOGENOM" id="CLU_034045_3_0_7"/>
<dbReference type="OrthoDB" id="9803580at2"/>
<dbReference type="UniPathway" id="UPA00193"/>
<dbReference type="Proteomes" id="UP000002534">
    <property type="component" value="Chromosome"/>
</dbReference>
<dbReference type="GO" id="GO:0005829">
    <property type="term" value="C:cytosol"/>
    <property type="evidence" value="ECO:0007669"/>
    <property type="project" value="TreeGrafter"/>
</dbReference>
<dbReference type="GO" id="GO:0004477">
    <property type="term" value="F:methenyltetrahydrofolate cyclohydrolase activity"/>
    <property type="evidence" value="ECO:0007669"/>
    <property type="project" value="UniProtKB-UniRule"/>
</dbReference>
<dbReference type="GO" id="GO:0004488">
    <property type="term" value="F:methylenetetrahydrofolate dehydrogenase (NADP+) activity"/>
    <property type="evidence" value="ECO:0007669"/>
    <property type="project" value="UniProtKB-UniRule"/>
</dbReference>
<dbReference type="GO" id="GO:0000105">
    <property type="term" value="P:L-histidine biosynthetic process"/>
    <property type="evidence" value="ECO:0007669"/>
    <property type="project" value="UniProtKB-KW"/>
</dbReference>
<dbReference type="GO" id="GO:0009086">
    <property type="term" value="P:methionine biosynthetic process"/>
    <property type="evidence" value="ECO:0007669"/>
    <property type="project" value="UniProtKB-KW"/>
</dbReference>
<dbReference type="GO" id="GO:0006164">
    <property type="term" value="P:purine nucleotide biosynthetic process"/>
    <property type="evidence" value="ECO:0007669"/>
    <property type="project" value="UniProtKB-KW"/>
</dbReference>
<dbReference type="GO" id="GO:0035999">
    <property type="term" value="P:tetrahydrofolate interconversion"/>
    <property type="evidence" value="ECO:0007669"/>
    <property type="project" value="UniProtKB-UniRule"/>
</dbReference>
<dbReference type="CDD" id="cd01080">
    <property type="entry name" value="NAD_bind_m-THF_DH_Cyclohyd"/>
    <property type="match status" value="1"/>
</dbReference>
<dbReference type="Gene3D" id="3.40.50.10860">
    <property type="entry name" value="Leucine Dehydrogenase, chain A, domain 1"/>
    <property type="match status" value="1"/>
</dbReference>
<dbReference type="Gene3D" id="3.40.50.720">
    <property type="entry name" value="NAD(P)-binding Rossmann-like Domain"/>
    <property type="match status" value="1"/>
</dbReference>
<dbReference type="HAMAP" id="MF_01576">
    <property type="entry name" value="THF_DHG_CYH"/>
    <property type="match status" value="1"/>
</dbReference>
<dbReference type="InterPro" id="IPR046346">
    <property type="entry name" value="Aminoacid_DH-like_N_sf"/>
</dbReference>
<dbReference type="InterPro" id="IPR036291">
    <property type="entry name" value="NAD(P)-bd_dom_sf"/>
</dbReference>
<dbReference type="InterPro" id="IPR000672">
    <property type="entry name" value="THF_DH/CycHdrlase"/>
</dbReference>
<dbReference type="InterPro" id="IPR020630">
    <property type="entry name" value="THF_DH/CycHdrlase_cat_dom"/>
</dbReference>
<dbReference type="InterPro" id="IPR020631">
    <property type="entry name" value="THF_DH/CycHdrlase_NAD-bd_dom"/>
</dbReference>
<dbReference type="PANTHER" id="PTHR48099:SF5">
    <property type="entry name" value="C-1-TETRAHYDROFOLATE SYNTHASE, CYTOPLASMIC"/>
    <property type="match status" value="1"/>
</dbReference>
<dbReference type="PANTHER" id="PTHR48099">
    <property type="entry name" value="C-1-TETRAHYDROFOLATE SYNTHASE, CYTOPLASMIC-RELATED"/>
    <property type="match status" value="1"/>
</dbReference>
<dbReference type="Pfam" id="PF00763">
    <property type="entry name" value="THF_DHG_CYH"/>
    <property type="match status" value="1"/>
</dbReference>
<dbReference type="Pfam" id="PF02882">
    <property type="entry name" value="THF_DHG_CYH_C"/>
    <property type="match status" value="1"/>
</dbReference>
<dbReference type="PRINTS" id="PR00085">
    <property type="entry name" value="THFDHDRGNASE"/>
</dbReference>
<dbReference type="SUPFAM" id="SSF53223">
    <property type="entry name" value="Aminoacid dehydrogenase-like, N-terminal domain"/>
    <property type="match status" value="1"/>
</dbReference>
<dbReference type="SUPFAM" id="SSF51735">
    <property type="entry name" value="NAD(P)-binding Rossmann-fold domains"/>
    <property type="match status" value="1"/>
</dbReference>
<gene>
    <name evidence="1" type="primary">folD</name>
    <name type="ordered locus">Pcar_2461</name>
</gene>
<organism>
    <name type="scientific">Syntrophotalea carbinolica (strain DSM 2380 / NBRC 103641 / GraBd1)</name>
    <name type="common">Pelobacter carbinolicus</name>
    <dbReference type="NCBI Taxonomy" id="338963"/>
    <lineage>
        <taxon>Bacteria</taxon>
        <taxon>Pseudomonadati</taxon>
        <taxon>Thermodesulfobacteriota</taxon>
        <taxon>Desulfuromonadia</taxon>
        <taxon>Desulfuromonadales</taxon>
        <taxon>Syntrophotaleaceae</taxon>
        <taxon>Syntrophotalea</taxon>
    </lineage>
</organism>
<proteinExistence type="inferred from homology"/>
<feature type="chain" id="PRO_0000268428" description="Bifunctional protein FolD">
    <location>
        <begin position="1"/>
        <end position="290"/>
    </location>
</feature>
<feature type="binding site" evidence="1">
    <location>
        <begin position="165"/>
        <end position="167"/>
    </location>
    <ligand>
        <name>NADP(+)</name>
        <dbReference type="ChEBI" id="CHEBI:58349"/>
    </ligand>
</feature>
<feature type="binding site" evidence="1">
    <location>
        <position position="194"/>
    </location>
    <ligand>
        <name>NADP(+)</name>
        <dbReference type="ChEBI" id="CHEBI:58349"/>
    </ligand>
</feature>
<feature type="binding site" evidence="1">
    <location>
        <position position="235"/>
    </location>
    <ligand>
        <name>NADP(+)</name>
        <dbReference type="ChEBI" id="CHEBI:58349"/>
    </ligand>
</feature>
<comment type="function">
    <text evidence="1">Catalyzes the oxidation of 5,10-methylenetetrahydrofolate to 5,10-methenyltetrahydrofolate and then the hydrolysis of 5,10-methenyltetrahydrofolate to 10-formyltetrahydrofolate.</text>
</comment>
<comment type="catalytic activity">
    <reaction evidence="1">
        <text>(6R)-5,10-methylene-5,6,7,8-tetrahydrofolate + NADP(+) = (6R)-5,10-methenyltetrahydrofolate + NADPH</text>
        <dbReference type="Rhea" id="RHEA:22812"/>
        <dbReference type="ChEBI" id="CHEBI:15636"/>
        <dbReference type="ChEBI" id="CHEBI:57455"/>
        <dbReference type="ChEBI" id="CHEBI:57783"/>
        <dbReference type="ChEBI" id="CHEBI:58349"/>
        <dbReference type="EC" id="1.5.1.5"/>
    </reaction>
</comment>
<comment type="catalytic activity">
    <reaction evidence="1">
        <text>(6R)-5,10-methenyltetrahydrofolate + H2O = (6R)-10-formyltetrahydrofolate + H(+)</text>
        <dbReference type="Rhea" id="RHEA:23700"/>
        <dbReference type="ChEBI" id="CHEBI:15377"/>
        <dbReference type="ChEBI" id="CHEBI:15378"/>
        <dbReference type="ChEBI" id="CHEBI:57455"/>
        <dbReference type="ChEBI" id="CHEBI:195366"/>
        <dbReference type="EC" id="3.5.4.9"/>
    </reaction>
</comment>
<comment type="pathway">
    <text evidence="1">One-carbon metabolism; tetrahydrofolate interconversion.</text>
</comment>
<comment type="subunit">
    <text evidence="1">Homodimer.</text>
</comment>
<comment type="similarity">
    <text evidence="1">Belongs to the tetrahydrofolate dehydrogenase/cyclohydrolase family.</text>
</comment>
<protein>
    <recommendedName>
        <fullName evidence="1">Bifunctional protein FolD</fullName>
    </recommendedName>
    <domain>
        <recommendedName>
            <fullName evidence="1">Methylenetetrahydrofolate dehydrogenase</fullName>
            <ecNumber evidence="1">1.5.1.5</ecNumber>
        </recommendedName>
    </domain>
    <domain>
        <recommendedName>
            <fullName evidence="1">Methenyltetrahydrofolate cyclohydrolase</fullName>
            <ecNumber evidence="1">3.5.4.9</ecNumber>
        </recommendedName>
    </domain>
</protein>
<sequence length="290" mass="30555">MSAQLLEGKVVAAAVLEDVARRVAVLKDKGISPGLGTILVGDDGPSVSYVNKKRETCKQVGIASFHNEIPASATQSDLLAAVRDFNDSPDVDAYIIQYPLPKGFDFNEALNLMLPEKDADGLHPVNLGRLVLQEPGPVPCTPAGIRAMLQHYDIAIEGKEVVVIGRGPTLGRPLSLLLTLKQPYANAAVTVVHSGIKDLGAYTRRADIVIAAAGCPGIVQPDMIRPGAVVISGGISWEGRKLLPDVDEAVGEVAGWITPRLGGVGPTTVAMLLLNTVQAAEERARRAGKL</sequence>
<keyword id="KW-0028">Amino-acid biosynthesis</keyword>
<keyword id="KW-0368">Histidine biosynthesis</keyword>
<keyword id="KW-0378">Hydrolase</keyword>
<keyword id="KW-0486">Methionine biosynthesis</keyword>
<keyword id="KW-0511">Multifunctional enzyme</keyword>
<keyword id="KW-0521">NADP</keyword>
<keyword id="KW-0554">One-carbon metabolism</keyword>
<keyword id="KW-0560">Oxidoreductase</keyword>
<keyword id="KW-0658">Purine biosynthesis</keyword>
<keyword id="KW-1185">Reference proteome</keyword>
<reference key="1">
    <citation type="submission" date="2005-10" db="EMBL/GenBank/DDBJ databases">
        <title>Complete sequence of Pelobacter carbinolicus DSM 2380.</title>
        <authorList>
            <person name="Copeland A."/>
            <person name="Lucas S."/>
            <person name="Lapidus A."/>
            <person name="Barry K."/>
            <person name="Detter J.C."/>
            <person name="Glavina T."/>
            <person name="Hammon N."/>
            <person name="Israni S."/>
            <person name="Pitluck S."/>
            <person name="Chertkov O."/>
            <person name="Schmutz J."/>
            <person name="Larimer F."/>
            <person name="Land M."/>
            <person name="Kyrpides N."/>
            <person name="Ivanova N."/>
            <person name="Richardson P."/>
        </authorList>
    </citation>
    <scope>NUCLEOTIDE SEQUENCE [LARGE SCALE GENOMIC DNA]</scope>
    <source>
        <strain>DSM 2380 / NBRC 103641 / GraBd1</strain>
    </source>
</reference>